<keyword id="KW-0032">Aminotransferase</keyword>
<keyword id="KW-0808">Transferase</keyword>
<comment type="function">
    <text evidence="1">The glycine cleavage system catalyzes the degradation of glycine.</text>
</comment>
<comment type="catalytic activity">
    <reaction evidence="1">
        <text>N(6)-[(R)-S(8)-aminomethyldihydrolipoyl]-L-lysyl-[protein] + (6S)-5,6,7,8-tetrahydrofolate = N(6)-[(R)-dihydrolipoyl]-L-lysyl-[protein] + (6R)-5,10-methylene-5,6,7,8-tetrahydrofolate + NH4(+)</text>
        <dbReference type="Rhea" id="RHEA:16945"/>
        <dbReference type="Rhea" id="RHEA-COMP:10475"/>
        <dbReference type="Rhea" id="RHEA-COMP:10492"/>
        <dbReference type="ChEBI" id="CHEBI:15636"/>
        <dbReference type="ChEBI" id="CHEBI:28938"/>
        <dbReference type="ChEBI" id="CHEBI:57453"/>
        <dbReference type="ChEBI" id="CHEBI:83100"/>
        <dbReference type="ChEBI" id="CHEBI:83143"/>
        <dbReference type="EC" id="2.1.2.10"/>
    </reaction>
</comment>
<comment type="subunit">
    <text evidence="1">The glycine cleavage system is composed of four proteins: P, T, L and H.</text>
</comment>
<comment type="similarity">
    <text evidence="1">Belongs to the GcvT family.</text>
</comment>
<accession>B1JSZ4</accession>
<feature type="chain" id="PRO_1000114081" description="Aminomethyltransferase">
    <location>
        <begin position="1"/>
        <end position="372"/>
    </location>
</feature>
<name>GCST_BURO0</name>
<protein>
    <recommendedName>
        <fullName evidence="1">Aminomethyltransferase</fullName>
        <ecNumber evidence="1">2.1.2.10</ecNumber>
    </recommendedName>
    <alternativeName>
        <fullName evidence="1">Glycine cleavage system T protein</fullName>
    </alternativeName>
</protein>
<gene>
    <name evidence="1" type="primary">gcvT</name>
    <name type="ordered locus">Bcenmc03_0159</name>
</gene>
<reference key="1">
    <citation type="submission" date="2008-02" db="EMBL/GenBank/DDBJ databases">
        <title>Complete sequence of chromosome 1 of Burkholderia cenocepacia MC0-3.</title>
        <authorList>
            <person name="Copeland A."/>
            <person name="Lucas S."/>
            <person name="Lapidus A."/>
            <person name="Barry K."/>
            <person name="Bruce D."/>
            <person name="Goodwin L."/>
            <person name="Glavina del Rio T."/>
            <person name="Dalin E."/>
            <person name="Tice H."/>
            <person name="Pitluck S."/>
            <person name="Chain P."/>
            <person name="Malfatti S."/>
            <person name="Shin M."/>
            <person name="Vergez L."/>
            <person name="Schmutz J."/>
            <person name="Larimer F."/>
            <person name="Land M."/>
            <person name="Hauser L."/>
            <person name="Kyrpides N."/>
            <person name="Mikhailova N."/>
            <person name="Tiedje J."/>
            <person name="Richardson P."/>
        </authorList>
    </citation>
    <scope>NUCLEOTIDE SEQUENCE [LARGE SCALE GENOMIC DNA]</scope>
    <source>
        <strain>MC0-3</strain>
    </source>
</reference>
<dbReference type="EC" id="2.1.2.10" evidence="1"/>
<dbReference type="EMBL" id="CP000958">
    <property type="protein sequence ID" value="ACA89339.1"/>
    <property type="molecule type" value="Genomic_DNA"/>
</dbReference>
<dbReference type="RefSeq" id="WP_012327636.1">
    <property type="nucleotide sequence ID" value="NC_010508.1"/>
</dbReference>
<dbReference type="SMR" id="B1JSZ4"/>
<dbReference type="GeneID" id="83046957"/>
<dbReference type="KEGG" id="bcm:Bcenmc03_0159"/>
<dbReference type="HOGENOM" id="CLU_007884_10_2_4"/>
<dbReference type="Proteomes" id="UP000002169">
    <property type="component" value="Chromosome 1"/>
</dbReference>
<dbReference type="GO" id="GO:0005829">
    <property type="term" value="C:cytosol"/>
    <property type="evidence" value="ECO:0007669"/>
    <property type="project" value="TreeGrafter"/>
</dbReference>
<dbReference type="GO" id="GO:0005960">
    <property type="term" value="C:glycine cleavage complex"/>
    <property type="evidence" value="ECO:0007669"/>
    <property type="project" value="InterPro"/>
</dbReference>
<dbReference type="GO" id="GO:0004047">
    <property type="term" value="F:aminomethyltransferase activity"/>
    <property type="evidence" value="ECO:0007669"/>
    <property type="project" value="UniProtKB-UniRule"/>
</dbReference>
<dbReference type="GO" id="GO:0008483">
    <property type="term" value="F:transaminase activity"/>
    <property type="evidence" value="ECO:0007669"/>
    <property type="project" value="UniProtKB-KW"/>
</dbReference>
<dbReference type="GO" id="GO:0019464">
    <property type="term" value="P:glycine decarboxylation via glycine cleavage system"/>
    <property type="evidence" value="ECO:0007669"/>
    <property type="project" value="UniProtKB-UniRule"/>
</dbReference>
<dbReference type="FunFam" id="3.30.70.1400:FF:000001">
    <property type="entry name" value="Aminomethyltransferase"/>
    <property type="match status" value="1"/>
</dbReference>
<dbReference type="FunFam" id="4.10.1250.10:FF:000001">
    <property type="entry name" value="Aminomethyltransferase"/>
    <property type="match status" value="1"/>
</dbReference>
<dbReference type="Gene3D" id="2.40.30.110">
    <property type="entry name" value="Aminomethyltransferase beta-barrel domains"/>
    <property type="match status" value="1"/>
</dbReference>
<dbReference type="Gene3D" id="3.30.70.1400">
    <property type="entry name" value="Aminomethyltransferase beta-barrel domains"/>
    <property type="match status" value="1"/>
</dbReference>
<dbReference type="Gene3D" id="4.10.1250.10">
    <property type="entry name" value="Aminomethyltransferase fragment"/>
    <property type="match status" value="1"/>
</dbReference>
<dbReference type="Gene3D" id="3.30.1360.120">
    <property type="entry name" value="Probable tRNA modification gtpase trme, domain 1"/>
    <property type="match status" value="1"/>
</dbReference>
<dbReference type="HAMAP" id="MF_00259">
    <property type="entry name" value="GcvT"/>
    <property type="match status" value="1"/>
</dbReference>
<dbReference type="InterPro" id="IPR006223">
    <property type="entry name" value="GCS_T"/>
</dbReference>
<dbReference type="InterPro" id="IPR022903">
    <property type="entry name" value="GCS_T_bac"/>
</dbReference>
<dbReference type="InterPro" id="IPR013977">
    <property type="entry name" value="GCST_C"/>
</dbReference>
<dbReference type="InterPro" id="IPR006222">
    <property type="entry name" value="GCV_T_N"/>
</dbReference>
<dbReference type="InterPro" id="IPR028896">
    <property type="entry name" value="GcvT/YgfZ/DmdA"/>
</dbReference>
<dbReference type="InterPro" id="IPR029043">
    <property type="entry name" value="GcvT/YgfZ_C"/>
</dbReference>
<dbReference type="InterPro" id="IPR027266">
    <property type="entry name" value="TrmE/GcvT_dom1"/>
</dbReference>
<dbReference type="NCBIfam" id="TIGR00528">
    <property type="entry name" value="gcvT"/>
    <property type="match status" value="1"/>
</dbReference>
<dbReference type="NCBIfam" id="NF001567">
    <property type="entry name" value="PRK00389.1"/>
    <property type="match status" value="1"/>
</dbReference>
<dbReference type="PANTHER" id="PTHR43757">
    <property type="entry name" value="AMINOMETHYLTRANSFERASE"/>
    <property type="match status" value="1"/>
</dbReference>
<dbReference type="PANTHER" id="PTHR43757:SF2">
    <property type="entry name" value="AMINOMETHYLTRANSFERASE, MITOCHONDRIAL"/>
    <property type="match status" value="1"/>
</dbReference>
<dbReference type="Pfam" id="PF01571">
    <property type="entry name" value="GCV_T"/>
    <property type="match status" value="1"/>
</dbReference>
<dbReference type="Pfam" id="PF08669">
    <property type="entry name" value="GCV_T_C"/>
    <property type="match status" value="1"/>
</dbReference>
<dbReference type="PIRSF" id="PIRSF006487">
    <property type="entry name" value="GcvT"/>
    <property type="match status" value="1"/>
</dbReference>
<dbReference type="SUPFAM" id="SSF101790">
    <property type="entry name" value="Aminomethyltransferase beta-barrel domain"/>
    <property type="match status" value="1"/>
</dbReference>
<dbReference type="SUPFAM" id="SSF103025">
    <property type="entry name" value="Folate-binding domain"/>
    <property type="match status" value="1"/>
</dbReference>
<evidence type="ECO:0000255" key="1">
    <source>
        <dbReference type="HAMAP-Rule" id="MF_00259"/>
    </source>
</evidence>
<organism>
    <name type="scientific">Burkholderia orbicola (strain MC0-3)</name>
    <dbReference type="NCBI Taxonomy" id="406425"/>
    <lineage>
        <taxon>Bacteria</taxon>
        <taxon>Pseudomonadati</taxon>
        <taxon>Pseudomonadota</taxon>
        <taxon>Betaproteobacteria</taxon>
        <taxon>Burkholderiales</taxon>
        <taxon>Burkholderiaceae</taxon>
        <taxon>Burkholderia</taxon>
        <taxon>Burkholderia cepacia complex</taxon>
        <taxon>Burkholderia orbicola</taxon>
    </lineage>
</organism>
<proteinExistence type="inferred from homology"/>
<sequence>MTALNHTPLNAAHRALNARMVDFGGWDMPVNYGSQIEEHAAVRTDAGMFDVSHMCVVDFTGSRVRAFFEHAIANHVGKLKTPGKALYSCLLNPQGGVIDDLIVYYFTEEFFRVVVNAGTAEKDIAWFNQLNKQGGYGLTIAPRRDFAIVAVQGPNAREKVWATVPAARAATSELKPFNAAQVAGTPFGDLTIARTGYTGEDGFEVIVPAVHVEVLWNALQQHGVRPCGLGARDTLRLEAGMNLYGQDMDDTVSPLDAGLAWTVDLTAPRDFVGRAALEANGTRAAFVGLILQKENGKAGGVLRAHQKVVTPHGEGEITSGTFSPSMQESIAFARVPAAVQVGDIVQVQIRDKNLPARVVKLPFVRNGKVLAA</sequence>